<name>MTOX_ECOHS</name>
<dbReference type="EC" id="1.5.3.-" evidence="1"/>
<dbReference type="EMBL" id="CP000802">
    <property type="protein sequence ID" value="ABV05521.1"/>
    <property type="molecule type" value="Genomic_DNA"/>
</dbReference>
<dbReference type="RefSeq" id="WP_000872811.1">
    <property type="nucleotide sequence ID" value="NC_009800.1"/>
</dbReference>
<dbReference type="SMR" id="A7ZZ17"/>
<dbReference type="KEGG" id="ecx:EcHS_A1182"/>
<dbReference type="HOGENOM" id="CLU_007884_2_1_6"/>
<dbReference type="GO" id="GO:0005829">
    <property type="term" value="C:cytosol"/>
    <property type="evidence" value="ECO:0007669"/>
    <property type="project" value="TreeGrafter"/>
</dbReference>
<dbReference type="GO" id="GO:0050660">
    <property type="term" value="F:flavin adenine dinucleotide binding"/>
    <property type="evidence" value="ECO:0007669"/>
    <property type="project" value="InterPro"/>
</dbReference>
<dbReference type="GO" id="GO:0050131">
    <property type="term" value="F:N-methyl-L-amino-acid oxidase activity"/>
    <property type="evidence" value="ECO:0007669"/>
    <property type="project" value="InterPro"/>
</dbReference>
<dbReference type="GO" id="GO:0008115">
    <property type="term" value="F:sarcosine oxidase activity"/>
    <property type="evidence" value="ECO:0007669"/>
    <property type="project" value="TreeGrafter"/>
</dbReference>
<dbReference type="Gene3D" id="3.30.9.10">
    <property type="entry name" value="D-Amino Acid Oxidase, subunit A, domain 2"/>
    <property type="match status" value="1"/>
</dbReference>
<dbReference type="Gene3D" id="3.50.50.60">
    <property type="entry name" value="FAD/NAD(P)-binding domain"/>
    <property type="match status" value="1"/>
</dbReference>
<dbReference type="HAMAP" id="MF_00515">
    <property type="entry name" value="MTOX"/>
    <property type="match status" value="1"/>
</dbReference>
<dbReference type="InterPro" id="IPR006076">
    <property type="entry name" value="FAD-dep_OxRdtase"/>
</dbReference>
<dbReference type="InterPro" id="IPR036188">
    <property type="entry name" value="FAD/NAD-bd_sf"/>
</dbReference>
<dbReference type="InterPro" id="IPR023493">
    <property type="entry name" value="Me_Trp_Oxase_MTOX"/>
</dbReference>
<dbReference type="InterPro" id="IPR045170">
    <property type="entry name" value="MTOX"/>
</dbReference>
<dbReference type="NCBIfam" id="NF008425">
    <property type="entry name" value="PRK11259.1"/>
    <property type="match status" value="1"/>
</dbReference>
<dbReference type="PANTHER" id="PTHR10961:SF7">
    <property type="entry name" value="FAD DEPENDENT OXIDOREDUCTASE DOMAIN-CONTAINING PROTEIN"/>
    <property type="match status" value="1"/>
</dbReference>
<dbReference type="PANTHER" id="PTHR10961">
    <property type="entry name" value="PEROXISOMAL SARCOSINE OXIDASE"/>
    <property type="match status" value="1"/>
</dbReference>
<dbReference type="Pfam" id="PF01266">
    <property type="entry name" value="DAO"/>
    <property type="match status" value="1"/>
</dbReference>
<dbReference type="SUPFAM" id="SSF54373">
    <property type="entry name" value="FAD-linked reductases, C-terminal domain"/>
    <property type="match status" value="1"/>
</dbReference>
<dbReference type="SUPFAM" id="SSF51905">
    <property type="entry name" value="FAD/NAD(P)-binding domain"/>
    <property type="match status" value="1"/>
</dbReference>
<evidence type="ECO:0000255" key="1">
    <source>
        <dbReference type="HAMAP-Rule" id="MF_00515"/>
    </source>
</evidence>
<reference key="1">
    <citation type="journal article" date="2008" name="J. Bacteriol.">
        <title>The pangenome structure of Escherichia coli: comparative genomic analysis of E. coli commensal and pathogenic isolates.</title>
        <authorList>
            <person name="Rasko D.A."/>
            <person name="Rosovitz M.J."/>
            <person name="Myers G.S.A."/>
            <person name="Mongodin E.F."/>
            <person name="Fricke W.F."/>
            <person name="Gajer P."/>
            <person name="Crabtree J."/>
            <person name="Sebaihia M."/>
            <person name="Thomson N.R."/>
            <person name="Chaudhuri R."/>
            <person name="Henderson I.R."/>
            <person name="Sperandio V."/>
            <person name="Ravel J."/>
        </authorList>
    </citation>
    <scope>NUCLEOTIDE SEQUENCE [LARGE SCALE GENOMIC DNA]</scope>
    <source>
        <strain>HS</strain>
    </source>
</reference>
<protein>
    <recommendedName>
        <fullName evidence="1">N-methyl-L-tryptophan oxidase</fullName>
        <shortName evidence="1">MTOX</shortName>
        <ecNumber evidence="1">1.5.3.-</ecNumber>
    </recommendedName>
</protein>
<comment type="function">
    <text evidence="1">Catalyzes the oxidative demethylation of N-methyl-L-tryptophan.</text>
</comment>
<comment type="catalytic activity">
    <reaction evidence="1">
        <text>N(alpha)-methyl-L-tryptophan + O2 + H2O = L-tryptophan + formaldehyde + H2O2</text>
        <dbReference type="Rhea" id="RHEA:28006"/>
        <dbReference type="ChEBI" id="CHEBI:15377"/>
        <dbReference type="ChEBI" id="CHEBI:15379"/>
        <dbReference type="ChEBI" id="CHEBI:16240"/>
        <dbReference type="ChEBI" id="CHEBI:16842"/>
        <dbReference type="ChEBI" id="CHEBI:57283"/>
        <dbReference type="ChEBI" id="CHEBI:57912"/>
    </reaction>
</comment>
<comment type="cofactor">
    <cofactor evidence="1">
        <name>FAD</name>
        <dbReference type="ChEBI" id="CHEBI:57692"/>
    </cofactor>
    <text evidence="1">Binds 1 FAD per subunit.</text>
</comment>
<comment type="subunit">
    <text evidence="1">Monomer.</text>
</comment>
<comment type="similarity">
    <text evidence="1">Belongs to the MSOX/MTOX family. MTOX subfamily.</text>
</comment>
<organism>
    <name type="scientific">Escherichia coli O9:H4 (strain HS)</name>
    <dbReference type="NCBI Taxonomy" id="331112"/>
    <lineage>
        <taxon>Bacteria</taxon>
        <taxon>Pseudomonadati</taxon>
        <taxon>Pseudomonadota</taxon>
        <taxon>Gammaproteobacteria</taxon>
        <taxon>Enterobacterales</taxon>
        <taxon>Enterobacteriaceae</taxon>
        <taxon>Escherichia</taxon>
    </lineage>
</organism>
<keyword id="KW-0274">FAD</keyword>
<keyword id="KW-0285">Flavoprotein</keyword>
<keyword id="KW-0560">Oxidoreductase</keyword>
<feature type="chain" id="PRO_1000060897" description="N-methyl-L-tryptophan oxidase">
    <location>
        <begin position="1"/>
        <end position="372"/>
    </location>
</feature>
<feature type="binding site" evidence="1">
    <location>
        <begin position="4"/>
        <end position="34"/>
    </location>
    <ligand>
        <name>FAD</name>
        <dbReference type="ChEBI" id="CHEBI:57692"/>
    </ligand>
</feature>
<feature type="modified residue" description="S-8alpha-FAD cysteine" evidence="1">
    <location>
        <position position="308"/>
    </location>
</feature>
<gene>
    <name evidence="1" type="primary">solA</name>
    <name type="ordered locus">EcHS_A1182</name>
</gene>
<proteinExistence type="inferred from homology"/>
<sequence length="372" mass="40886">MKYDLIIIGSGSVGAAAGYYATRAGLNVLMTDAHMPPHQHGSHHGDTRLIRHAYGEGEKYVPLVLRAQTLWDELSRHNEDDPIFVRSGVINLGPADSAFLANVAHSAEQWQLNVEKLDAQGIMARWPEIRVPDNYIGLFETDSGFLRSELAIKTWIQLAKEAGCAQLFNCPVTAIRHDDDGVTIETADGEYQAKKAIVCAGTWVKDLLPELPVQPVRKVFAWYQADGRYSVKNKFPAFTGELPNGDQYYGFPAENDALKIGKHNGGQVIHSADERVPFAEVVSDGSEAFPFLRNVLPGIGCCLYGAACTYDNSPDEDFIIDTLPGHDNTLLITGLSGHGFKFASVLGEIAADFAQDKKSDFDLTPFRLSRFQ</sequence>
<accession>A7ZZ17</accession>